<evidence type="ECO:0000255" key="1">
    <source>
        <dbReference type="PROSITE-ProRule" id="PRU00089"/>
    </source>
</evidence>
<evidence type="ECO:0000256" key="2">
    <source>
        <dbReference type="SAM" id="MobiDB-lite"/>
    </source>
</evidence>
<evidence type="ECO:0000269" key="3">
    <source>
    </source>
</evidence>
<evidence type="ECO:0000269" key="4">
    <source>
    </source>
</evidence>
<evidence type="ECO:0000269" key="5">
    <source>
    </source>
</evidence>
<evidence type="ECO:0000269" key="6">
    <source>
    </source>
</evidence>
<protein>
    <recommendedName>
        <fullName>Forkhead box protein F2</fullName>
    </recommendedName>
    <alternativeName>
        <fullName>Forkhead-related activator 2</fullName>
        <shortName>FREAC-2</shortName>
    </alternativeName>
    <alternativeName>
        <fullName>Forkhead-related protein FKHL6</fullName>
    </alternativeName>
    <alternativeName>
        <fullName>Forkhead-related transcription factor 2</fullName>
    </alternativeName>
</protein>
<comment type="function">
    <text evidence="3 4">Probable transcription activator for a number of lung-specific genes (PubMed:8626802). Mediates up-regulation of the E3 ligase IRF2BPL and drives ubiquitination and degradation of CTNNB1 (PubMed:29374064).</text>
</comment>
<comment type="subunit">
    <text evidence="5">Interacts with the transcription factors TBP and TFIIB.</text>
</comment>
<comment type="subcellular location">
    <subcellularLocation>
        <location evidence="3 6">Nucleus</location>
    </subcellularLocation>
</comment>
<comment type="tissue specificity">
    <text evidence="3 4">Lung and placenta (PubMed:8626802). Predominantly expressed in gastrointestinal tract including stomach (PubMed:29374064).</text>
</comment>
<comment type="domain">
    <text evidence="5">Two activation domains, AD1 and AD2, C-terminal of (and distinct from) the forkhead domains are necessary for transcriptional activation.</text>
</comment>
<accession>Q12947</accession>
<accession>Q5TGJ1</accession>
<accession>Q9UQ85</accession>
<feature type="chain" id="PRO_0000091834" description="Forkhead box protein F2">
    <location>
        <begin position="1"/>
        <end position="444"/>
    </location>
</feature>
<feature type="DNA-binding region" description="Fork-head" evidence="1">
    <location>
        <begin position="99"/>
        <end position="190"/>
    </location>
</feature>
<feature type="region of interest" description="Disordered" evidence="2">
    <location>
        <begin position="32"/>
        <end position="98"/>
    </location>
</feature>
<feature type="region of interest" description="Disordered" evidence="2">
    <location>
        <begin position="256"/>
        <end position="323"/>
    </location>
</feature>
<feature type="region of interest" description="Disordered" evidence="2">
    <location>
        <begin position="338"/>
        <end position="367"/>
    </location>
</feature>
<feature type="compositionally biased region" description="Low complexity" evidence="2">
    <location>
        <begin position="34"/>
        <end position="75"/>
    </location>
</feature>
<feature type="compositionally biased region" description="Gly residues" evidence="2">
    <location>
        <begin position="76"/>
        <end position="87"/>
    </location>
</feature>
<feature type="compositionally biased region" description="Basic residues" evidence="2">
    <location>
        <begin position="263"/>
        <end position="274"/>
    </location>
</feature>
<feature type="compositionally biased region" description="Gly residues" evidence="2">
    <location>
        <begin position="293"/>
        <end position="308"/>
    </location>
</feature>
<feature type="compositionally biased region" description="Low complexity" evidence="2">
    <location>
        <begin position="309"/>
        <end position="323"/>
    </location>
</feature>
<reference key="1">
    <citation type="journal article" date="1998" name="Genomics">
        <title>The two-exon gene of the human forkhead transcription factor FREAC-2 (FKHL6) is located at 6p25.3.</title>
        <authorList>
            <person name="Blixt A."/>
            <person name="Mahlapuu M."/>
            <person name="Bjursell C."/>
            <person name="Darnfors C."/>
            <person name="Johannesson T."/>
            <person name="Enerbaeck S."/>
            <person name="Carlsson P."/>
        </authorList>
    </citation>
    <scope>NUCLEOTIDE SEQUENCE [GENOMIC DNA]</scope>
    <scope>SUBCELLULAR LOCATION</scope>
</reference>
<reference key="2">
    <citation type="journal article" date="2003" name="Nature">
        <title>The DNA sequence and analysis of human chromosome 6.</title>
        <authorList>
            <person name="Mungall A.J."/>
            <person name="Palmer S.A."/>
            <person name="Sims S.K."/>
            <person name="Edwards C.A."/>
            <person name="Ashurst J.L."/>
            <person name="Wilming L."/>
            <person name="Jones M.C."/>
            <person name="Horton R."/>
            <person name="Hunt S.E."/>
            <person name="Scott C.E."/>
            <person name="Gilbert J.G.R."/>
            <person name="Clamp M.E."/>
            <person name="Bethel G."/>
            <person name="Milne S."/>
            <person name="Ainscough R."/>
            <person name="Almeida J.P."/>
            <person name="Ambrose K.D."/>
            <person name="Andrews T.D."/>
            <person name="Ashwell R.I.S."/>
            <person name="Babbage A.K."/>
            <person name="Bagguley C.L."/>
            <person name="Bailey J."/>
            <person name="Banerjee R."/>
            <person name="Barker D.J."/>
            <person name="Barlow K.F."/>
            <person name="Bates K."/>
            <person name="Beare D.M."/>
            <person name="Beasley H."/>
            <person name="Beasley O."/>
            <person name="Bird C.P."/>
            <person name="Blakey S.E."/>
            <person name="Bray-Allen S."/>
            <person name="Brook J."/>
            <person name="Brown A.J."/>
            <person name="Brown J.Y."/>
            <person name="Burford D.C."/>
            <person name="Burrill W."/>
            <person name="Burton J."/>
            <person name="Carder C."/>
            <person name="Carter N.P."/>
            <person name="Chapman J.C."/>
            <person name="Clark S.Y."/>
            <person name="Clark G."/>
            <person name="Clee C.M."/>
            <person name="Clegg S."/>
            <person name="Cobley V."/>
            <person name="Collier R.E."/>
            <person name="Collins J.E."/>
            <person name="Colman L.K."/>
            <person name="Corby N.R."/>
            <person name="Coville G.J."/>
            <person name="Culley K.M."/>
            <person name="Dhami P."/>
            <person name="Davies J."/>
            <person name="Dunn M."/>
            <person name="Earthrowl M.E."/>
            <person name="Ellington A.E."/>
            <person name="Evans K.A."/>
            <person name="Faulkner L."/>
            <person name="Francis M.D."/>
            <person name="Frankish A."/>
            <person name="Frankland J."/>
            <person name="French L."/>
            <person name="Garner P."/>
            <person name="Garnett J."/>
            <person name="Ghori M.J."/>
            <person name="Gilby L.M."/>
            <person name="Gillson C.J."/>
            <person name="Glithero R.J."/>
            <person name="Grafham D.V."/>
            <person name="Grant M."/>
            <person name="Gribble S."/>
            <person name="Griffiths C."/>
            <person name="Griffiths M.N.D."/>
            <person name="Hall R."/>
            <person name="Halls K.S."/>
            <person name="Hammond S."/>
            <person name="Harley J.L."/>
            <person name="Hart E.A."/>
            <person name="Heath P.D."/>
            <person name="Heathcott R."/>
            <person name="Holmes S.J."/>
            <person name="Howden P.J."/>
            <person name="Howe K.L."/>
            <person name="Howell G.R."/>
            <person name="Huckle E."/>
            <person name="Humphray S.J."/>
            <person name="Humphries M.D."/>
            <person name="Hunt A.R."/>
            <person name="Johnson C.M."/>
            <person name="Joy A.A."/>
            <person name="Kay M."/>
            <person name="Keenan S.J."/>
            <person name="Kimberley A.M."/>
            <person name="King A."/>
            <person name="Laird G.K."/>
            <person name="Langford C."/>
            <person name="Lawlor S."/>
            <person name="Leongamornlert D.A."/>
            <person name="Leversha M."/>
            <person name="Lloyd C.R."/>
            <person name="Lloyd D.M."/>
            <person name="Loveland J.E."/>
            <person name="Lovell J."/>
            <person name="Martin S."/>
            <person name="Mashreghi-Mohammadi M."/>
            <person name="Maslen G.L."/>
            <person name="Matthews L."/>
            <person name="McCann O.T."/>
            <person name="McLaren S.J."/>
            <person name="McLay K."/>
            <person name="McMurray A."/>
            <person name="Moore M.J.F."/>
            <person name="Mullikin J.C."/>
            <person name="Niblett D."/>
            <person name="Nickerson T."/>
            <person name="Novik K.L."/>
            <person name="Oliver K."/>
            <person name="Overton-Larty E.K."/>
            <person name="Parker A."/>
            <person name="Patel R."/>
            <person name="Pearce A.V."/>
            <person name="Peck A.I."/>
            <person name="Phillimore B.J.C.T."/>
            <person name="Phillips S."/>
            <person name="Plumb R.W."/>
            <person name="Porter K.M."/>
            <person name="Ramsey Y."/>
            <person name="Ranby S.A."/>
            <person name="Rice C.M."/>
            <person name="Ross M.T."/>
            <person name="Searle S.M."/>
            <person name="Sehra H.K."/>
            <person name="Sheridan E."/>
            <person name="Skuce C.D."/>
            <person name="Smith S."/>
            <person name="Smith M."/>
            <person name="Spraggon L."/>
            <person name="Squares S.L."/>
            <person name="Steward C.A."/>
            <person name="Sycamore N."/>
            <person name="Tamlyn-Hall G."/>
            <person name="Tester J."/>
            <person name="Theaker A.J."/>
            <person name="Thomas D.W."/>
            <person name="Thorpe A."/>
            <person name="Tracey A."/>
            <person name="Tromans A."/>
            <person name="Tubby B."/>
            <person name="Wall M."/>
            <person name="Wallis J.M."/>
            <person name="West A.P."/>
            <person name="White S.S."/>
            <person name="Whitehead S.L."/>
            <person name="Whittaker H."/>
            <person name="Wild A."/>
            <person name="Willey D.J."/>
            <person name="Wilmer T.E."/>
            <person name="Wood J.M."/>
            <person name="Wray P.W."/>
            <person name="Wyatt J.C."/>
            <person name="Young L."/>
            <person name="Younger R.M."/>
            <person name="Bentley D.R."/>
            <person name="Coulson A."/>
            <person name="Durbin R.M."/>
            <person name="Hubbard T."/>
            <person name="Sulston J.E."/>
            <person name="Dunham I."/>
            <person name="Rogers J."/>
            <person name="Beck S."/>
        </authorList>
    </citation>
    <scope>NUCLEOTIDE SEQUENCE [LARGE SCALE GENOMIC DNA]</scope>
</reference>
<reference key="3">
    <citation type="submission" date="2005-07" db="EMBL/GenBank/DDBJ databases">
        <authorList>
            <person name="Mural R.J."/>
            <person name="Istrail S."/>
            <person name="Sutton G.G."/>
            <person name="Florea L."/>
            <person name="Halpern A.L."/>
            <person name="Mobarry C.M."/>
            <person name="Lippert R."/>
            <person name="Walenz B."/>
            <person name="Shatkay H."/>
            <person name="Dew I."/>
            <person name="Miller J.R."/>
            <person name="Flanigan M.J."/>
            <person name="Edwards N.J."/>
            <person name="Bolanos R."/>
            <person name="Fasulo D."/>
            <person name="Halldorsson B.V."/>
            <person name="Hannenhalli S."/>
            <person name="Turner R."/>
            <person name="Yooseph S."/>
            <person name="Lu F."/>
            <person name="Nusskern D.R."/>
            <person name="Shue B.C."/>
            <person name="Zheng X.H."/>
            <person name="Zhong F."/>
            <person name="Delcher A.L."/>
            <person name="Huson D.H."/>
            <person name="Kravitz S.A."/>
            <person name="Mouchard L."/>
            <person name="Reinert K."/>
            <person name="Remington K.A."/>
            <person name="Clark A.G."/>
            <person name="Waterman M.S."/>
            <person name="Eichler E.E."/>
            <person name="Adams M.D."/>
            <person name="Hunkapiller M.W."/>
            <person name="Myers E.W."/>
            <person name="Venter J.C."/>
        </authorList>
    </citation>
    <scope>NUCLEOTIDE SEQUENCE [LARGE SCALE GENOMIC DNA]</scope>
</reference>
<reference key="4">
    <citation type="journal article" date="1996" name="J. Biol. Chem.">
        <title>Differential activation of lung-specific genes by two forkhead proteins, FREAC-1 and FREAC-2.</title>
        <authorList>
            <person name="Hellqvist M."/>
            <person name="Mahlapuu M."/>
            <person name="Samuelsson L."/>
            <person name="Enerbaeck S."/>
            <person name="Carlsson P."/>
        </authorList>
    </citation>
    <scope>NUCLEOTIDE SEQUENCE [MRNA] OF 37-444</scope>
    <scope>TISSUE SPECIFICITY</scope>
    <source>
        <tissue>Lung</tissue>
    </source>
</reference>
<reference key="5">
    <citation type="journal article" date="1994" name="EMBO J.">
        <title>Cloning and characterization of seven human forkhead proteins: binding site specificity and DNA bending.</title>
        <authorList>
            <person name="Pierrou S."/>
            <person name="Hellqvist M."/>
            <person name="Samuelsson L."/>
            <person name="Enerbaeck S."/>
            <person name="Carlsson P."/>
        </authorList>
    </citation>
    <scope>PARTIAL NUCLEOTIDE SEQUENCE [MRNA]</scope>
</reference>
<reference key="6">
    <citation type="journal article" date="1998" name="J. Biol. Chem.">
        <title>The human forkhead protein FREAC-2 contains two functionally redundant activation domains and interacts with TBP and TFIIB.</title>
        <authorList>
            <person name="Hellqvist M."/>
            <person name="Mahlapuu M."/>
            <person name="Blixt A."/>
            <person name="Enerbaeck S."/>
            <person name="Carlsson P."/>
        </authorList>
    </citation>
    <scope>DOMAIN</scope>
    <scope>INTERACTION WITH TBP AND TFIIB</scope>
</reference>
<reference key="7">
    <citation type="journal article" date="2018" name="Cancer Res.">
        <title>Forkhead Box F2 Suppresses Gastric Cancer through a Novel FOXF2-IRF2BPL-beta-Catenin Signaling Axis.</title>
        <authorList>
            <person name="Higashimori A."/>
            <person name="Dong Y."/>
            <person name="Zhang Y."/>
            <person name="Kang W."/>
            <person name="Nakatsu G."/>
            <person name="Ng S.S.M."/>
            <person name="Arakawa T."/>
            <person name="Sung J.J.Y."/>
            <person name="Chan F.K.L."/>
            <person name="Yu J."/>
        </authorList>
    </citation>
    <scope>FUNCTION</scope>
    <scope>SUBCELLULAR LOCATION</scope>
    <scope>TISSUE SPECIFICITY</scope>
</reference>
<keyword id="KW-0010">Activator</keyword>
<keyword id="KW-0238">DNA-binding</keyword>
<keyword id="KW-0539">Nucleus</keyword>
<keyword id="KW-1267">Proteomics identification</keyword>
<keyword id="KW-1185">Reference proteome</keyword>
<keyword id="KW-0804">Transcription</keyword>
<keyword id="KW-0805">Transcription regulation</keyword>
<gene>
    <name type="primary">FOXF2</name>
    <name type="synonym">FKHL6</name>
    <name type="synonym">FREAC2</name>
</gene>
<proteinExistence type="evidence at protein level"/>
<dbReference type="EMBL" id="AF084939">
    <property type="protein sequence ID" value="AAD19875.1"/>
    <property type="molecule type" value="Genomic_DNA"/>
</dbReference>
<dbReference type="EMBL" id="AF084938">
    <property type="protein sequence ID" value="AAD19875.1"/>
    <property type="status" value="JOINED"/>
    <property type="molecule type" value="Genomic_DNA"/>
</dbReference>
<dbReference type="EMBL" id="AL034346">
    <property type="status" value="NOT_ANNOTATED_CDS"/>
    <property type="molecule type" value="Genomic_DNA"/>
</dbReference>
<dbReference type="EMBL" id="CH471087">
    <property type="protein sequence ID" value="EAW55072.1"/>
    <property type="molecule type" value="Genomic_DNA"/>
</dbReference>
<dbReference type="EMBL" id="U13220">
    <property type="protein sequence ID" value="AAC32226.1"/>
    <property type="molecule type" value="mRNA"/>
</dbReference>
<dbReference type="CCDS" id="CCDS4472.1"/>
<dbReference type="PIR" id="S51625">
    <property type="entry name" value="S51625"/>
</dbReference>
<dbReference type="PIR" id="T09474">
    <property type="entry name" value="T09474"/>
</dbReference>
<dbReference type="RefSeq" id="NP_001443.1">
    <property type="nucleotide sequence ID" value="NM_001452.2"/>
</dbReference>
<dbReference type="SMR" id="Q12947"/>
<dbReference type="BioGRID" id="108584">
    <property type="interactions" value="54"/>
</dbReference>
<dbReference type="FunCoup" id="Q12947">
    <property type="interactions" value="1315"/>
</dbReference>
<dbReference type="IntAct" id="Q12947">
    <property type="interactions" value="52"/>
</dbReference>
<dbReference type="MINT" id="Q12947"/>
<dbReference type="STRING" id="9606.ENSP00000496415"/>
<dbReference type="iPTMnet" id="Q12947"/>
<dbReference type="PhosphoSitePlus" id="Q12947"/>
<dbReference type="BioMuta" id="FOXF2"/>
<dbReference type="DMDM" id="8247925"/>
<dbReference type="jPOST" id="Q12947"/>
<dbReference type="MassIVE" id="Q12947"/>
<dbReference type="PaxDb" id="9606-ENSP00000259806"/>
<dbReference type="PeptideAtlas" id="Q12947"/>
<dbReference type="ProteomicsDB" id="59042"/>
<dbReference type="Pumba" id="Q12947"/>
<dbReference type="Antibodypedia" id="9203">
    <property type="antibodies" value="238 antibodies from 23 providers"/>
</dbReference>
<dbReference type="DNASU" id="2295"/>
<dbReference type="Ensembl" id="ENST00000645481.2">
    <property type="protein sequence ID" value="ENSP00000496415.1"/>
    <property type="gene ID" value="ENSG00000137273.6"/>
</dbReference>
<dbReference type="GeneID" id="2295"/>
<dbReference type="KEGG" id="hsa:2295"/>
<dbReference type="MANE-Select" id="ENST00000645481.2">
    <property type="protein sequence ID" value="ENSP00000496415.1"/>
    <property type="RefSeq nucleotide sequence ID" value="NM_001452.2"/>
    <property type="RefSeq protein sequence ID" value="NP_001443.1"/>
</dbReference>
<dbReference type="UCSC" id="uc003mtm.3">
    <property type="organism name" value="human"/>
</dbReference>
<dbReference type="AGR" id="HGNC:3810"/>
<dbReference type="CTD" id="2295"/>
<dbReference type="DisGeNET" id="2295"/>
<dbReference type="GeneCards" id="FOXF2"/>
<dbReference type="HGNC" id="HGNC:3810">
    <property type="gene designation" value="FOXF2"/>
</dbReference>
<dbReference type="HPA" id="ENSG00000137273">
    <property type="expression patterns" value="Tissue enhanced (intestine)"/>
</dbReference>
<dbReference type="MalaCards" id="FOXF2"/>
<dbReference type="MIM" id="603250">
    <property type="type" value="gene"/>
</dbReference>
<dbReference type="neXtProt" id="NX_Q12947"/>
<dbReference type="OpenTargets" id="ENSG00000137273"/>
<dbReference type="PharmGKB" id="PA28227"/>
<dbReference type="VEuPathDB" id="HostDB:ENSG00000137273"/>
<dbReference type="eggNOG" id="KOG2294">
    <property type="taxonomic scope" value="Eukaryota"/>
</dbReference>
<dbReference type="GeneTree" id="ENSGT00940000162527"/>
<dbReference type="HOGENOM" id="CLU_039845_1_0_1"/>
<dbReference type="InParanoid" id="Q12947"/>
<dbReference type="OMA" id="HQNGRED"/>
<dbReference type="OrthoDB" id="5954824at2759"/>
<dbReference type="PAN-GO" id="Q12947">
    <property type="GO annotations" value="5 GO annotations based on evolutionary models"/>
</dbReference>
<dbReference type="PhylomeDB" id="Q12947"/>
<dbReference type="TreeFam" id="TF351598"/>
<dbReference type="PathwayCommons" id="Q12947"/>
<dbReference type="SignaLink" id="Q12947"/>
<dbReference type="SIGNOR" id="Q12947"/>
<dbReference type="BioGRID-ORCS" id="2295">
    <property type="hits" value="17 hits in 1180 CRISPR screens"/>
</dbReference>
<dbReference type="GenomeRNAi" id="2295"/>
<dbReference type="Pharos" id="Q12947">
    <property type="development level" value="Tbio"/>
</dbReference>
<dbReference type="PRO" id="PR:Q12947"/>
<dbReference type="Proteomes" id="UP000005640">
    <property type="component" value="Chromosome 6"/>
</dbReference>
<dbReference type="RNAct" id="Q12947">
    <property type="molecule type" value="protein"/>
</dbReference>
<dbReference type="Bgee" id="ENSG00000137273">
    <property type="expression patterns" value="Expressed in periodontal ligament and 129 other cell types or tissues"/>
</dbReference>
<dbReference type="GO" id="GO:0000785">
    <property type="term" value="C:chromatin"/>
    <property type="evidence" value="ECO:0000247"/>
    <property type="project" value="NTNU_SB"/>
</dbReference>
<dbReference type="GO" id="GO:0043231">
    <property type="term" value="C:intracellular membrane-bounded organelle"/>
    <property type="evidence" value="ECO:0000314"/>
    <property type="project" value="HPA"/>
</dbReference>
<dbReference type="GO" id="GO:0016604">
    <property type="term" value="C:nuclear body"/>
    <property type="evidence" value="ECO:0000314"/>
    <property type="project" value="HPA"/>
</dbReference>
<dbReference type="GO" id="GO:0005654">
    <property type="term" value="C:nucleoplasm"/>
    <property type="evidence" value="ECO:0000314"/>
    <property type="project" value="HPA"/>
</dbReference>
<dbReference type="GO" id="GO:0005634">
    <property type="term" value="C:nucleus"/>
    <property type="evidence" value="ECO:0000314"/>
    <property type="project" value="UniProtKB"/>
</dbReference>
<dbReference type="GO" id="GO:0005667">
    <property type="term" value="C:transcription regulator complex"/>
    <property type="evidence" value="ECO:0000314"/>
    <property type="project" value="UniProtKB"/>
</dbReference>
<dbReference type="GO" id="GO:0003677">
    <property type="term" value="F:DNA binding"/>
    <property type="evidence" value="ECO:0000314"/>
    <property type="project" value="MGI"/>
</dbReference>
<dbReference type="GO" id="GO:0001228">
    <property type="term" value="F:DNA-binding transcription activator activity, RNA polymerase II-specific"/>
    <property type="evidence" value="ECO:0000314"/>
    <property type="project" value="NTNU_SB"/>
</dbReference>
<dbReference type="GO" id="GO:0003700">
    <property type="term" value="F:DNA-binding transcription factor activity"/>
    <property type="evidence" value="ECO:0000314"/>
    <property type="project" value="UniProtKB"/>
</dbReference>
<dbReference type="GO" id="GO:0000981">
    <property type="term" value="F:DNA-binding transcription factor activity, RNA polymerase II-specific"/>
    <property type="evidence" value="ECO:0000247"/>
    <property type="project" value="NTNU_SB"/>
</dbReference>
<dbReference type="GO" id="GO:0140296">
    <property type="term" value="F:general transcription initiation factor binding"/>
    <property type="evidence" value="ECO:0000353"/>
    <property type="project" value="UniProtKB"/>
</dbReference>
<dbReference type="GO" id="GO:0000978">
    <property type="term" value="F:RNA polymerase II cis-regulatory region sequence-specific DNA binding"/>
    <property type="evidence" value="ECO:0000318"/>
    <property type="project" value="GO_Central"/>
</dbReference>
<dbReference type="GO" id="GO:0000977">
    <property type="term" value="F:RNA polymerase II transcription regulatory region sequence-specific DNA binding"/>
    <property type="evidence" value="ECO:0000314"/>
    <property type="project" value="NTNU_SB"/>
</dbReference>
<dbReference type="GO" id="GO:0043565">
    <property type="term" value="F:sequence-specific DNA binding"/>
    <property type="evidence" value="ECO:0000314"/>
    <property type="project" value="UniProtKB"/>
</dbReference>
<dbReference type="GO" id="GO:0001093">
    <property type="term" value="F:TFIIB-class transcription factor binding"/>
    <property type="evidence" value="ECO:0000353"/>
    <property type="project" value="UniProtKB"/>
</dbReference>
<dbReference type="GO" id="GO:0009887">
    <property type="term" value="P:animal organ morphogenesis"/>
    <property type="evidence" value="ECO:0000318"/>
    <property type="project" value="GO_Central"/>
</dbReference>
<dbReference type="GO" id="GO:0048596">
    <property type="term" value="P:embryonic camera-type eye morphogenesis"/>
    <property type="evidence" value="ECO:0007669"/>
    <property type="project" value="Ensembl"/>
</dbReference>
<dbReference type="GO" id="GO:0048566">
    <property type="term" value="P:embryonic digestive tract development"/>
    <property type="evidence" value="ECO:0007669"/>
    <property type="project" value="Ensembl"/>
</dbReference>
<dbReference type="GO" id="GO:0001837">
    <property type="term" value="P:epithelial to mesenchymal transition"/>
    <property type="evidence" value="ECO:0000303"/>
    <property type="project" value="UniProtKB"/>
</dbReference>
<dbReference type="GO" id="GO:0042249">
    <property type="term" value="P:establishment of planar polarity of embryonic epithelium"/>
    <property type="evidence" value="ECO:0007669"/>
    <property type="project" value="Ensembl"/>
</dbReference>
<dbReference type="GO" id="GO:0030198">
    <property type="term" value="P:extracellular matrix organization"/>
    <property type="evidence" value="ECO:0007669"/>
    <property type="project" value="Ensembl"/>
</dbReference>
<dbReference type="GO" id="GO:0048806">
    <property type="term" value="P:genitalia development"/>
    <property type="evidence" value="ECO:0000315"/>
    <property type="project" value="UniProtKB"/>
</dbReference>
<dbReference type="GO" id="GO:0045892">
    <property type="term" value="P:negative regulation of DNA-templated transcription"/>
    <property type="evidence" value="ECO:0007669"/>
    <property type="project" value="Ensembl"/>
</dbReference>
<dbReference type="GO" id="GO:0045893">
    <property type="term" value="P:positive regulation of DNA-templated transcription"/>
    <property type="evidence" value="ECO:0000314"/>
    <property type="project" value="UniProtKB"/>
</dbReference>
<dbReference type="GO" id="GO:0045944">
    <property type="term" value="P:positive regulation of transcription by RNA polymerase II"/>
    <property type="evidence" value="ECO:0000314"/>
    <property type="project" value="MGI"/>
</dbReference>
<dbReference type="GO" id="GO:0032434">
    <property type="term" value="P:regulation of proteasomal ubiquitin-dependent protein catabolic process"/>
    <property type="evidence" value="ECO:0000314"/>
    <property type="project" value="UniProtKB"/>
</dbReference>
<dbReference type="GO" id="GO:1902914">
    <property type="term" value="P:regulation of protein polyubiquitination"/>
    <property type="evidence" value="ECO:0000314"/>
    <property type="project" value="UniProtKB"/>
</dbReference>
<dbReference type="GO" id="GO:0006357">
    <property type="term" value="P:regulation of transcription by RNA polymerase II"/>
    <property type="evidence" value="ECO:0000318"/>
    <property type="project" value="GO_Central"/>
</dbReference>
<dbReference type="GO" id="GO:0060021">
    <property type="term" value="P:roof of mouth development"/>
    <property type="evidence" value="ECO:0000315"/>
    <property type="project" value="UniProtKB"/>
</dbReference>
<dbReference type="CDD" id="cd20049">
    <property type="entry name" value="FH_FOXF1"/>
    <property type="match status" value="1"/>
</dbReference>
<dbReference type="FunFam" id="1.10.10.10:FF:000071">
    <property type="entry name" value="Forkhead box F1"/>
    <property type="match status" value="1"/>
</dbReference>
<dbReference type="Gene3D" id="1.10.10.10">
    <property type="entry name" value="Winged helix-like DNA-binding domain superfamily/Winged helix DNA-binding domain"/>
    <property type="match status" value="1"/>
</dbReference>
<dbReference type="InterPro" id="IPR001766">
    <property type="entry name" value="Fork_head_dom"/>
</dbReference>
<dbReference type="InterPro" id="IPR051770">
    <property type="entry name" value="Forkhead_box_regulator"/>
</dbReference>
<dbReference type="InterPro" id="IPR018122">
    <property type="entry name" value="TF_fork_head_CS_1"/>
</dbReference>
<dbReference type="InterPro" id="IPR030456">
    <property type="entry name" value="TF_fork_head_CS_2"/>
</dbReference>
<dbReference type="InterPro" id="IPR036388">
    <property type="entry name" value="WH-like_DNA-bd_sf"/>
</dbReference>
<dbReference type="InterPro" id="IPR036390">
    <property type="entry name" value="WH_DNA-bd_sf"/>
</dbReference>
<dbReference type="PANTHER" id="PTHR46262">
    <property type="entry name" value="FORKHEAD BOX PROTEIN BINIOU"/>
    <property type="match status" value="1"/>
</dbReference>
<dbReference type="PANTHER" id="PTHR46262:SF3">
    <property type="entry name" value="FORKHEAD BOX PROTEIN F2"/>
    <property type="match status" value="1"/>
</dbReference>
<dbReference type="Pfam" id="PF00250">
    <property type="entry name" value="Forkhead"/>
    <property type="match status" value="1"/>
</dbReference>
<dbReference type="PRINTS" id="PR00053">
    <property type="entry name" value="FORKHEAD"/>
</dbReference>
<dbReference type="SMART" id="SM00339">
    <property type="entry name" value="FH"/>
    <property type="match status" value="1"/>
</dbReference>
<dbReference type="SUPFAM" id="SSF46785">
    <property type="entry name" value="Winged helix' DNA-binding domain"/>
    <property type="match status" value="1"/>
</dbReference>
<dbReference type="PROSITE" id="PS00657">
    <property type="entry name" value="FORK_HEAD_1"/>
    <property type="match status" value="1"/>
</dbReference>
<dbReference type="PROSITE" id="PS00658">
    <property type="entry name" value="FORK_HEAD_2"/>
    <property type="match status" value="1"/>
</dbReference>
<dbReference type="PROSITE" id="PS50039">
    <property type="entry name" value="FORK_HEAD_3"/>
    <property type="match status" value="1"/>
</dbReference>
<name>FOXF2_HUMAN</name>
<organism>
    <name type="scientific">Homo sapiens</name>
    <name type="common">Human</name>
    <dbReference type="NCBI Taxonomy" id="9606"/>
    <lineage>
        <taxon>Eukaryota</taxon>
        <taxon>Metazoa</taxon>
        <taxon>Chordata</taxon>
        <taxon>Craniata</taxon>
        <taxon>Vertebrata</taxon>
        <taxon>Euteleostomi</taxon>
        <taxon>Mammalia</taxon>
        <taxon>Eutheria</taxon>
        <taxon>Euarchontoglires</taxon>
        <taxon>Primates</taxon>
        <taxon>Haplorrhini</taxon>
        <taxon>Catarrhini</taxon>
        <taxon>Hominidae</taxon>
        <taxon>Homo</taxon>
    </lineage>
</organism>
<sequence>MTTEGGPPPAPLRRACSPVPGALQAALMSPPPAAAAAAAAAPETTSSSSSSSSASCASSSSSSNSASAPSAACKSAGGGGAGAGSGGAKKASSGLRRPEKPPYSYIALIVMAIQSSPSKRLTLSEIYQFLQARFPFFRGAYQGWKNSVRHNLSLNECFIKLPKGLGRPGKGHYWTIDPASEFMFEEGSFRRRPRGFRRKCQALKPMYHRVVSGLGFGASLLPQGFDFQAPPSAPLGCHSQGGYGGLDMMPAGYDAGAGAPSHAHPHHHHHHHVPHMSPNPGSTYMASCPVPAGPGGVGAAGGGGGGDYGPDSSSSPVPSSPAMASAIECHSPYTSPAAHWSSPGASPYLKQPPALTPSSNPAASAGLHSSMSSYSLEQSYLHQNAREDLSVGLPRYQHHSTPVCDRKDFVLNFNGISSFHPSASGSYYHHHHQSVCQDIKPCVM</sequence>